<sequence length="170" mass="19391">MSVLQVLHYPDERLRKIAAPVKEVNGEIQRIVDDMFETMYAEEGIGLAATQVDVHQQIIVIDISENRDQRLVLINPELLEKSGETGIEEGCLSIPEQRALVPRAEKVKIRALDRDGKPFELETDGLLAICIQHEMDHLIGKLFVDYLSPLKRQRIRQKLEKMAKLNARAN</sequence>
<evidence type="ECO:0000255" key="1">
    <source>
        <dbReference type="HAMAP-Rule" id="MF_00163"/>
    </source>
</evidence>
<keyword id="KW-0378">Hydrolase</keyword>
<keyword id="KW-0408">Iron</keyword>
<keyword id="KW-0479">Metal-binding</keyword>
<keyword id="KW-0648">Protein biosynthesis</keyword>
<proteinExistence type="inferred from homology"/>
<organism>
    <name type="scientific">Yersinia pestis bv. Antiqua (strain Nepal516)</name>
    <dbReference type="NCBI Taxonomy" id="377628"/>
    <lineage>
        <taxon>Bacteria</taxon>
        <taxon>Pseudomonadati</taxon>
        <taxon>Pseudomonadota</taxon>
        <taxon>Gammaproteobacteria</taxon>
        <taxon>Enterobacterales</taxon>
        <taxon>Yersiniaceae</taxon>
        <taxon>Yersinia</taxon>
    </lineage>
</organism>
<comment type="function">
    <text evidence="1">Removes the formyl group from the N-terminal Met of newly synthesized proteins. Requires at least a dipeptide for an efficient rate of reaction. N-terminal L-methionine is a prerequisite for activity but the enzyme has broad specificity at other positions.</text>
</comment>
<comment type="catalytic activity">
    <reaction evidence="1">
        <text>N-terminal N-formyl-L-methionyl-[peptide] + H2O = N-terminal L-methionyl-[peptide] + formate</text>
        <dbReference type="Rhea" id="RHEA:24420"/>
        <dbReference type="Rhea" id="RHEA-COMP:10639"/>
        <dbReference type="Rhea" id="RHEA-COMP:10640"/>
        <dbReference type="ChEBI" id="CHEBI:15377"/>
        <dbReference type="ChEBI" id="CHEBI:15740"/>
        <dbReference type="ChEBI" id="CHEBI:49298"/>
        <dbReference type="ChEBI" id="CHEBI:64731"/>
        <dbReference type="EC" id="3.5.1.88"/>
    </reaction>
</comment>
<comment type="cofactor">
    <cofactor evidence="1">
        <name>Fe(2+)</name>
        <dbReference type="ChEBI" id="CHEBI:29033"/>
    </cofactor>
    <text evidence="1">Binds 1 Fe(2+) ion.</text>
</comment>
<comment type="similarity">
    <text evidence="1">Belongs to the polypeptide deformylase family.</text>
</comment>
<name>DEF_YERPN</name>
<accession>Q1CCX6</accession>
<accession>D1Q2I8</accession>
<protein>
    <recommendedName>
        <fullName evidence="1">Peptide deformylase</fullName>
        <shortName evidence="1">PDF</shortName>
        <ecNumber evidence="1">3.5.1.88</ecNumber>
    </recommendedName>
    <alternativeName>
        <fullName evidence="1">Polypeptide deformylase</fullName>
    </alternativeName>
</protein>
<reference key="1">
    <citation type="journal article" date="2006" name="J. Bacteriol.">
        <title>Complete genome sequence of Yersinia pestis strains Antiqua and Nepal516: evidence of gene reduction in an emerging pathogen.</title>
        <authorList>
            <person name="Chain P.S.G."/>
            <person name="Hu P."/>
            <person name="Malfatti S.A."/>
            <person name="Radnedge L."/>
            <person name="Larimer F."/>
            <person name="Vergez L.M."/>
            <person name="Worsham P."/>
            <person name="Chu M.C."/>
            <person name="Andersen G.L."/>
        </authorList>
    </citation>
    <scope>NUCLEOTIDE SEQUENCE [LARGE SCALE GENOMIC DNA]</scope>
    <source>
        <strain>Nepal516</strain>
    </source>
</reference>
<reference key="2">
    <citation type="submission" date="2009-04" db="EMBL/GenBank/DDBJ databases">
        <title>Yersinia pestis Nepal516A whole genome shotgun sequencing project.</title>
        <authorList>
            <person name="Plunkett G. III"/>
            <person name="Anderson B.D."/>
            <person name="Baumler D.J."/>
            <person name="Burland V."/>
            <person name="Cabot E.L."/>
            <person name="Glasner J.D."/>
            <person name="Mau B."/>
            <person name="Neeno-Eckwall E."/>
            <person name="Perna N.T."/>
            <person name="Munk A.C."/>
            <person name="Tapia R."/>
            <person name="Green L.D."/>
            <person name="Rogers Y.C."/>
            <person name="Detter J.C."/>
            <person name="Bruce D.C."/>
            <person name="Brettin T.S."/>
        </authorList>
    </citation>
    <scope>NUCLEOTIDE SEQUENCE [LARGE SCALE GENOMIC DNA]</scope>
    <source>
        <strain>Nepal516</strain>
    </source>
</reference>
<gene>
    <name evidence="1" type="primary">def</name>
    <name type="ordered locus">YPN_3827</name>
    <name type="ORF">YP516_4349</name>
</gene>
<feature type="chain" id="PRO_0000301128" description="Peptide deformylase">
    <location>
        <begin position="1"/>
        <end position="170"/>
    </location>
</feature>
<feature type="active site" evidence="1">
    <location>
        <position position="134"/>
    </location>
</feature>
<feature type="binding site" evidence="1">
    <location>
        <position position="91"/>
    </location>
    <ligand>
        <name>Fe cation</name>
        <dbReference type="ChEBI" id="CHEBI:24875"/>
    </ligand>
</feature>
<feature type="binding site" evidence="1">
    <location>
        <position position="133"/>
    </location>
    <ligand>
        <name>Fe cation</name>
        <dbReference type="ChEBI" id="CHEBI:24875"/>
    </ligand>
</feature>
<feature type="binding site" evidence="1">
    <location>
        <position position="137"/>
    </location>
    <ligand>
        <name>Fe cation</name>
        <dbReference type="ChEBI" id="CHEBI:24875"/>
    </ligand>
</feature>
<dbReference type="EC" id="3.5.1.88" evidence="1"/>
<dbReference type="EMBL" id="CP000305">
    <property type="protein sequence ID" value="ABG20154.1"/>
    <property type="molecule type" value="Genomic_DNA"/>
</dbReference>
<dbReference type="EMBL" id="ACNQ01000019">
    <property type="protein sequence ID" value="EEO74741.1"/>
    <property type="molecule type" value="Genomic_DNA"/>
</dbReference>
<dbReference type="RefSeq" id="WP_002209021.1">
    <property type="nucleotide sequence ID" value="NZ_ACNQ01000019.1"/>
</dbReference>
<dbReference type="SMR" id="Q1CCX6"/>
<dbReference type="GeneID" id="57974362"/>
<dbReference type="KEGG" id="ypn:YPN_3827"/>
<dbReference type="HOGENOM" id="CLU_061901_2_1_6"/>
<dbReference type="Proteomes" id="UP000008936">
    <property type="component" value="Chromosome"/>
</dbReference>
<dbReference type="GO" id="GO:0046872">
    <property type="term" value="F:metal ion binding"/>
    <property type="evidence" value="ECO:0007669"/>
    <property type="project" value="UniProtKB-KW"/>
</dbReference>
<dbReference type="GO" id="GO:0042586">
    <property type="term" value="F:peptide deformylase activity"/>
    <property type="evidence" value="ECO:0007669"/>
    <property type="project" value="UniProtKB-UniRule"/>
</dbReference>
<dbReference type="GO" id="GO:0043686">
    <property type="term" value="P:co-translational protein modification"/>
    <property type="evidence" value="ECO:0007669"/>
    <property type="project" value="TreeGrafter"/>
</dbReference>
<dbReference type="GO" id="GO:0006412">
    <property type="term" value="P:translation"/>
    <property type="evidence" value="ECO:0007669"/>
    <property type="project" value="UniProtKB-UniRule"/>
</dbReference>
<dbReference type="CDD" id="cd00487">
    <property type="entry name" value="Pep_deformylase"/>
    <property type="match status" value="1"/>
</dbReference>
<dbReference type="FunFam" id="3.90.45.10:FF:000001">
    <property type="entry name" value="Peptide deformylase"/>
    <property type="match status" value="1"/>
</dbReference>
<dbReference type="Gene3D" id="3.90.45.10">
    <property type="entry name" value="Peptide deformylase"/>
    <property type="match status" value="1"/>
</dbReference>
<dbReference type="HAMAP" id="MF_00163">
    <property type="entry name" value="Pep_deformylase"/>
    <property type="match status" value="1"/>
</dbReference>
<dbReference type="InterPro" id="IPR023635">
    <property type="entry name" value="Peptide_deformylase"/>
</dbReference>
<dbReference type="InterPro" id="IPR036821">
    <property type="entry name" value="Peptide_deformylase_sf"/>
</dbReference>
<dbReference type="NCBIfam" id="TIGR00079">
    <property type="entry name" value="pept_deformyl"/>
    <property type="match status" value="1"/>
</dbReference>
<dbReference type="NCBIfam" id="NF001159">
    <property type="entry name" value="PRK00150.1-3"/>
    <property type="match status" value="1"/>
</dbReference>
<dbReference type="PANTHER" id="PTHR10458">
    <property type="entry name" value="PEPTIDE DEFORMYLASE"/>
    <property type="match status" value="1"/>
</dbReference>
<dbReference type="PANTHER" id="PTHR10458:SF21">
    <property type="entry name" value="PEPTIDE DEFORMYLASE"/>
    <property type="match status" value="1"/>
</dbReference>
<dbReference type="Pfam" id="PF01327">
    <property type="entry name" value="Pep_deformylase"/>
    <property type="match status" value="1"/>
</dbReference>
<dbReference type="PIRSF" id="PIRSF004749">
    <property type="entry name" value="Pep_def"/>
    <property type="match status" value="1"/>
</dbReference>
<dbReference type="PRINTS" id="PR01576">
    <property type="entry name" value="PDEFORMYLASE"/>
</dbReference>
<dbReference type="SUPFAM" id="SSF56420">
    <property type="entry name" value="Peptide deformylase"/>
    <property type="match status" value="1"/>
</dbReference>